<proteinExistence type="inferred from homology"/>
<reference key="1">
    <citation type="journal article" date="2000" name="Nucleic Acids Res.">
        <title>Genome sequences of Chlamydia trachomatis MoPn and Chlamydia pneumoniae AR39.</title>
        <authorList>
            <person name="Read T.D."/>
            <person name="Brunham R.C."/>
            <person name="Shen C."/>
            <person name="Gill S.R."/>
            <person name="Heidelberg J.F."/>
            <person name="White O."/>
            <person name="Hickey E.K."/>
            <person name="Peterson J.D."/>
            <person name="Utterback T.R."/>
            <person name="Berry K.J."/>
            <person name="Bass S."/>
            <person name="Linher K.D."/>
            <person name="Weidman J.F."/>
            <person name="Khouri H.M."/>
            <person name="Craven B."/>
            <person name="Bowman C."/>
            <person name="Dodson R.J."/>
            <person name="Gwinn M.L."/>
            <person name="Nelson W.C."/>
            <person name="DeBoy R.T."/>
            <person name="Kolonay J.F."/>
            <person name="McClarty G."/>
            <person name="Salzberg S.L."/>
            <person name="Eisen J.A."/>
            <person name="Fraser C.M."/>
        </authorList>
    </citation>
    <scope>NUCLEOTIDE SEQUENCE [LARGE SCALE GENOMIC DNA]</scope>
    <source>
        <strain>MoPn / Nigg</strain>
    </source>
</reference>
<keyword id="KW-0119">Carbohydrate metabolism</keyword>
<keyword id="KW-0320">Glycogen biosynthesis</keyword>
<keyword id="KW-0321">Glycogen metabolism</keyword>
<keyword id="KW-0328">Glycosyltransferase</keyword>
<keyword id="KW-0808">Transferase</keyword>
<name>GLGB_CHLMU</name>
<feature type="chain" id="PRO_0000188692" description="1,4-alpha-glucan branching enzyme GlgB">
    <location>
        <begin position="1"/>
        <end position="737"/>
    </location>
</feature>
<feature type="active site" description="Nucleophile" evidence="1">
    <location>
        <position position="399"/>
    </location>
</feature>
<feature type="active site" description="Proton donor" evidence="1">
    <location>
        <position position="452"/>
    </location>
</feature>
<gene>
    <name evidence="1" type="primary">glgB</name>
    <name type="ordered locus">TC_0257</name>
</gene>
<organism>
    <name type="scientific">Chlamydia muridarum (strain MoPn / Nigg)</name>
    <dbReference type="NCBI Taxonomy" id="243161"/>
    <lineage>
        <taxon>Bacteria</taxon>
        <taxon>Pseudomonadati</taxon>
        <taxon>Chlamydiota</taxon>
        <taxon>Chlamydiia</taxon>
        <taxon>Chlamydiales</taxon>
        <taxon>Chlamydiaceae</taxon>
        <taxon>Chlamydia/Chlamydophila group</taxon>
        <taxon>Chlamydia</taxon>
    </lineage>
</organism>
<comment type="function">
    <text evidence="1">Catalyzes the formation of the alpha-1,6-glucosidic linkages in glycogen by scission of a 1,4-alpha-linked oligosaccharide from growing alpha-1,4-glucan chains and the subsequent attachment of the oligosaccharide to the alpha-1,6 position.</text>
</comment>
<comment type="catalytic activity">
    <reaction evidence="1">
        <text>Transfers a segment of a (1-&gt;4)-alpha-D-glucan chain to a primary hydroxy group in a similar glucan chain.</text>
        <dbReference type="EC" id="2.4.1.18"/>
    </reaction>
</comment>
<comment type="pathway">
    <text evidence="1">Glycan biosynthesis; glycogen biosynthesis.</text>
</comment>
<comment type="subunit">
    <text evidence="1">Monomer.</text>
</comment>
<comment type="similarity">
    <text evidence="1">Belongs to the glycosyl hydrolase 13 family. GlgB subfamily.</text>
</comment>
<protein>
    <recommendedName>
        <fullName evidence="1">1,4-alpha-glucan branching enzyme GlgB</fullName>
        <ecNumber evidence="1">2.4.1.18</ecNumber>
    </recommendedName>
    <alternativeName>
        <fullName evidence="1">1,4-alpha-D-glucan:1,4-alpha-D-glucan 6-glucosyl-transferase</fullName>
    </alternativeName>
    <alternativeName>
        <fullName evidence="1">Alpha-(1-&gt;4)-glucan branching enzyme</fullName>
    </alternativeName>
    <alternativeName>
        <fullName evidence="1">Glycogen branching enzyme</fullName>
        <shortName evidence="1">BE</shortName>
    </alternativeName>
</protein>
<dbReference type="EC" id="2.4.1.18" evidence="1"/>
<dbReference type="EMBL" id="AE002160">
    <property type="protein sequence ID" value="AAF39126.1"/>
    <property type="molecule type" value="Genomic_DNA"/>
</dbReference>
<dbReference type="PIR" id="C81724">
    <property type="entry name" value="C81724"/>
</dbReference>
<dbReference type="RefSeq" id="WP_010229958.1">
    <property type="nucleotide sequence ID" value="NZ_CP063055.1"/>
</dbReference>
<dbReference type="SMR" id="Q9PL51"/>
<dbReference type="CAZy" id="CBM48">
    <property type="family name" value="Carbohydrate-Binding Module Family 48"/>
</dbReference>
<dbReference type="CAZy" id="GH13">
    <property type="family name" value="Glycoside Hydrolase Family 13"/>
</dbReference>
<dbReference type="GeneID" id="1246427"/>
<dbReference type="KEGG" id="cmu:TC_0257"/>
<dbReference type="eggNOG" id="COG0296">
    <property type="taxonomic scope" value="Bacteria"/>
</dbReference>
<dbReference type="HOGENOM" id="CLU_004245_3_2_0"/>
<dbReference type="OrthoDB" id="9800174at2"/>
<dbReference type="UniPathway" id="UPA00164"/>
<dbReference type="Proteomes" id="UP000000800">
    <property type="component" value="Chromosome"/>
</dbReference>
<dbReference type="GO" id="GO:0005829">
    <property type="term" value="C:cytosol"/>
    <property type="evidence" value="ECO:0007669"/>
    <property type="project" value="TreeGrafter"/>
</dbReference>
<dbReference type="GO" id="GO:0003844">
    <property type="term" value="F:1,4-alpha-glucan branching enzyme activity"/>
    <property type="evidence" value="ECO:0007669"/>
    <property type="project" value="UniProtKB-UniRule"/>
</dbReference>
<dbReference type="GO" id="GO:0043169">
    <property type="term" value="F:cation binding"/>
    <property type="evidence" value="ECO:0007669"/>
    <property type="project" value="InterPro"/>
</dbReference>
<dbReference type="GO" id="GO:0004553">
    <property type="term" value="F:hydrolase activity, hydrolyzing O-glycosyl compounds"/>
    <property type="evidence" value="ECO:0007669"/>
    <property type="project" value="InterPro"/>
</dbReference>
<dbReference type="GO" id="GO:0005978">
    <property type="term" value="P:glycogen biosynthetic process"/>
    <property type="evidence" value="ECO:0007669"/>
    <property type="project" value="UniProtKB-UniRule"/>
</dbReference>
<dbReference type="CDD" id="cd11322">
    <property type="entry name" value="AmyAc_Glg_BE"/>
    <property type="match status" value="1"/>
</dbReference>
<dbReference type="CDD" id="cd02855">
    <property type="entry name" value="E_set_GBE_prok_N"/>
    <property type="match status" value="1"/>
</dbReference>
<dbReference type="FunFam" id="2.60.40.10:FF:000169">
    <property type="entry name" value="1,4-alpha-glucan branching enzyme GlgB"/>
    <property type="match status" value="1"/>
</dbReference>
<dbReference type="FunFam" id="3.20.20.80:FF:000003">
    <property type="entry name" value="1,4-alpha-glucan branching enzyme GlgB"/>
    <property type="match status" value="1"/>
</dbReference>
<dbReference type="Gene3D" id="3.20.20.80">
    <property type="entry name" value="Glycosidases"/>
    <property type="match status" value="1"/>
</dbReference>
<dbReference type="Gene3D" id="2.60.40.1180">
    <property type="entry name" value="Golgi alpha-mannosidase II"/>
    <property type="match status" value="1"/>
</dbReference>
<dbReference type="Gene3D" id="2.60.40.10">
    <property type="entry name" value="Immunoglobulins"/>
    <property type="match status" value="1"/>
</dbReference>
<dbReference type="HAMAP" id="MF_00685">
    <property type="entry name" value="GlgB"/>
    <property type="match status" value="1"/>
</dbReference>
<dbReference type="InterPro" id="IPR006048">
    <property type="entry name" value="A-amylase/branching_C"/>
</dbReference>
<dbReference type="InterPro" id="IPR037439">
    <property type="entry name" value="Branching_enzy"/>
</dbReference>
<dbReference type="InterPro" id="IPR006407">
    <property type="entry name" value="GlgB"/>
</dbReference>
<dbReference type="InterPro" id="IPR044143">
    <property type="entry name" value="GlgB_N_E_set_prok"/>
</dbReference>
<dbReference type="InterPro" id="IPR006047">
    <property type="entry name" value="Glyco_hydro_13_cat_dom"/>
</dbReference>
<dbReference type="InterPro" id="IPR004193">
    <property type="entry name" value="Glyco_hydro_13_N"/>
</dbReference>
<dbReference type="InterPro" id="IPR013780">
    <property type="entry name" value="Glyco_hydro_b"/>
</dbReference>
<dbReference type="InterPro" id="IPR017853">
    <property type="entry name" value="Glycoside_hydrolase_SF"/>
</dbReference>
<dbReference type="InterPro" id="IPR013783">
    <property type="entry name" value="Ig-like_fold"/>
</dbReference>
<dbReference type="InterPro" id="IPR014756">
    <property type="entry name" value="Ig_E-set"/>
</dbReference>
<dbReference type="NCBIfam" id="TIGR01515">
    <property type="entry name" value="branching_enzym"/>
    <property type="match status" value="1"/>
</dbReference>
<dbReference type="NCBIfam" id="NF003811">
    <property type="entry name" value="PRK05402.1"/>
    <property type="match status" value="1"/>
</dbReference>
<dbReference type="NCBIfam" id="NF008967">
    <property type="entry name" value="PRK12313.1"/>
    <property type="match status" value="1"/>
</dbReference>
<dbReference type="PANTHER" id="PTHR43651">
    <property type="entry name" value="1,4-ALPHA-GLUCAN-BRANCHING ENZYME"/>
    <property type="match status" value="1"/>
</dbReference>
<dbReference type="PANTHER" id="PTHR43651:SF3">
    <property type="entry name" value="1,4-ALPHA-GLUCAN-BRANCHING ENZYME"/>
    <property type="match status" value="1"/>
</dbReference>
<dbReference type="Pfam" id="PF00128">
    <property type="entry name" value="Alpha-amylase"/>
    <property type="match status" value="2"/>
</dbReference>
<dbReference type="Pfam" id="PF02806">
    <property type="entry name" value="Alpha-amylase_C"/>
    <property type="match status" value="1"/>
</dbReference>
<dbReference type="Pfam" id="PF02922">
    <property type="entry name" value="CBM_48"/>
    <property type="match status" value="1"/>
</dbReference>
<dbReference type="PIRSF" id="PIRSF000463">
    <property type="entry name" value="GlgB"/>
    <property type="match status" value="1"/>
</dbReference>
<dbReference type="SMART" id="SM00642">
    <property type="entry name" value="Aamy"/>
    <property type="match status" value="1"/>
</dbReference>
<dbReference type="SUPFAM" id="SSF51445">
    <property type="entry name" value="(Trans)glycosidases"/>
    <property type="match status" value="1"/>
</dbReference>
<dbReference type="SUPFAM" id="SSF81296">
    <property type="entry name" value="E set domains"/>
    <property type="match status" value="2"/>
</dbReference>
<dbReference type="SUPFAM" id="SSF51011">
    <property type="entry name" value="Glycosyl hydrolase domain"/>
    <property type="match status" value="1"/>
</dbReference>
<accession>Q9PL51</accession>
<sequence>MDPFFLNTQHVELLVSGKQSSPQDLLGIVSESLNQDRIVLFRPGAKTVFVELQGKIQQAESHHSGIFSLPVTKGISPQDYRVYHQNGLLAHDPYAFPLLWGEIDSFLFHEGTHQHIYDRMGAIPCEIGGVPGVRFVIWAPHAQRVSVVGDFNCWHGLVNPLHKVSDQGVWELFVPGLTAGSCYKWEIVTASGQVLIKSDPYGKFFGSPPQSVSVVVDDRYEWGDKEWLDERSKKAEGPMNIYEVHVGSWRWQEEQPLNYRELADQLSLYCKQMHYTHVELLPVTEHPLNESWGYQTTGYYAPTSRYGSFEDLQYFIDTMHQHGIGVILDWVPGHFPVDSFAMSNFDGTPLYEYTRNPSPLHPHWHTYTFDYAKPEVCNFLLGSALFWIDKMHIDGIRVDAVSSMLYLDYGRNPGEWIPNRYGGRENLDAVRFLQQFNTIIHEKYPGVLTFAEESTTFPKITVSVEEGGLGFDYKWNMGWMHDTLHYFEKDFPYRPYHQSDLTFPQWYAFSERFLLPFSHDEVVHGKRSLIGKMPGDAWRQFAQLRLLLGYQICQPGKKLLFMGGEFGQGREWSPNRELDWDLLDIHYHQGVHLCSQKLNSLYVNSPQLWKGDHLPQSFRWIDFSDTRNGVVAYLRFASDEDKEALLCVHHFGVNHFLHYILPMLPMKSCSLLMNTDDLAFGGSGKGFRNPKMLTPEMVRKEKTSSELAPLDDDGSVAWGLDIEMPPSATLIFSVTLQ</sequence>
<evidence type="ECO:0000255" key="1">
    <source>
        <dbReference type="HAMAP-Rule" id="MF_00685"/>
    </source>
</evidence>